<reference key="1">
    <citation type="journal article" date="2003" name="Nucleic Acids Res.">
        <title>What's in the genome of a filamentous fungus? Analysis of the Neurospora genome sequence.</title>
        <authorList>
            <person name="Mannhaupt G."/>
            <person name="Montrone C."/>
            <person name="Haase D."/>
            <person name="Mewes H.-W."/>
            <person name="Aign V."/>
            <person name="Hoheisel J.D."/>
            <person name="Fartmann B."/>
            <person name="Nyakatura G."/>
            <person name="Kempken F."/>
            <person name="Maier J."/>
            <person name="Schulte U."/>
        </authorList>
    </citation>
    <scope>NUCLEOTIDE SEQUENCE [LARGE SCALE GENOMIC DNA]</scope>
    <source>
        <strain>ATCC 24698 / 74-OR23-1A / CBS 708.71 / DSM 1257 / FGSC 987</strain>
    </source>
</reference>
<reference key="2">
    <citation type="journal article" date="2003" name="Nature">
        <title>The genome sequence of the filamentous fungus Neurospora crassa.</title>
        <authorList>
            <person name="Galagan J.E."/>
            <person name="Calvo S.E."/>
            <person name="Borkovich K.A."/>
            <person name="Selker E.U."/>
            <person name="Read N.D."/>
            <person name="Jaffe D.B."/>
            <person name="FitzHugh W."/>
            <person name="Ma L.-J."/>
            <person name="Smirnov S."/>
            <person name="Purcell S."/>
            <person name="Rehman B."/>
            <person name="Elkins T."/>
            <person name="Engels R."/>
            <person name="Wang S."/>
            <person name="Nielsen C.B."/>
            <person name="Butler J."/>
            <person name="Endrizzi M."/>
            <person name="Qui D."/>
            <person name="Ianakiev P."/>
            <person name="Bell-Pedersen D."/>
            <person name="Nelson M.A."/>
            <person name="Werner-Washburne M."/>
            <person name="Selitrennikoff C.P."/>
            <person name="Kinsey J.A."/>
            <person name="Braun E.L."/>
            <person name="Zelter A."/>
            <person name="Schulte U."/>
            <person name="Kothe G.O."/>
            <person name="Jedd G."/>
            <person name="Mewes H.-W."/>
            <person name="Staben C."/>
            <person name="Marcotte E."/>
            <person name="Greenberg D."/>
            <person name="Roy A."/>
            <person name="Foley K."/>
            <person name="Naylor J."/>
            <person name="Stange-Thomann N."/>
            <person name="Barrett R."/>
            <person name="Gnerre S."/>
            <person name="Kamal M."/>
            <person name="Kamvysselis M."/>
            <person name="Mauceli E.W."/>
            <person name="Bielke C."/>
            <person name="Rudd S."/>
            <person name="Frishman D."/>
            <person name="Krystofova S."/>
            <person name="Rasmussen C."/>
            <person name="Metzenberg R.L."/>
            <person name="Perkins D.D."/>
            <person name="Kroken S."/>
            <person name="Cogoni C."/>
            <person name="Macino G."/>
            <person name="Catcheside D.E.A."/>
            <person name="Li W."/>
            <person name="Pratt R.J."/>
            <person name="Osmani S.A."/>
            <person name="DeSouza C.P.C."/>
            <person name="Glass N.L."/>
            <person name="Orbach M.J."/>
            <person name="Berglund J.A."/>
            <person name="Voelker R."/>
            <person name="Yarden O."/>
            <person name="Plamann M."/>
            <person name="Seiler S."/>
            <person name="Dunlap J.C."/>
            <person name="Radford A."/>
            <person name="Aramayo R."/>
            <person name="Natvig D.O."/>
            <person name="Alex L.A."/>
            <person name="Mannhaupt G."/>
            <person name="Ebbole D.J."/>
            <person name="Freitag M."/>
            <person name="Paulsen I."/>
            <person name="Sachs M.S."/>
            <person name="Lander E.S."/>
            <person name="Nusbaum C."/>
            <person name="Birren B.W."/>
        </authorList>
    </citation>
    <scope>NUCLEOTIDE SEQUENCE [LARGE SCALE GENOMIC DNA]</scope>
    <source>
        <strain>ATCC 24698 / 74-OR23-1A / CBS 708.71 / DSM 1257 / FGSC 987</strain>
    </source>
</reference>
<sequence length="461" mass="49408">MAFRTALRRVAAVNAAPATRLAGAGAGAATAARRSYATASQLTHPDPTEDSPSGKMVREHVPYMVTTYSRPPPVFVKGKGSYLWDLEDRKYLDFTSGIAVNSLGHCDEEFSKIIAEQAQELVHASNLYYNPWTGALSKLLVESTKASGGMHDASSVFVCNSGSEANEAGIKFARKVGKVLDPSGSKVEIVCFQNAFHGRTMGSLSATPNPKYQAPFAPMVPGFKVGTYNDIAAIPSLVTEKTCSVIVEPIQGEGGVMPATEEFLVALGKRCREVGALLHYDEIQCGLARTGTFWAHSSLPKEAHPDILTTAKAIGNGFPIAATIVNEHVASKIKVGDHGTTFGGNPLACRLAHYIVGRLADKQLQEGVKAKSEVFLRGFEKLRNKFPSLVKEVRGKGLILGLQLSEDPTPVIKAARERGLLVITAGTNTLRFVPSLLVTEGEIEEGLKILEESFEAVMVKA</sequence>
<evidence type="ECO:0000250" key="1"/>
<evidence type="ECO:0000255" key="2"/>
<evidence type="ECO:0000256" key="3">
    <source>
        <dbReference type="SAM" id="MobiDB-lite"/>
    </source>
</evidence>
<evidence type="ECO:0000305" key="4"/>
<dbReference type="EC" id="2.6.1.11"/>
<dbReference type="EMBL" id="AL389901">
    <property type="protein sequence ID" value="CAB97483.1"/>
    <property type="molecule type" value="Genomic_DNA"/>
</dbReference>
<dbReference type="EMBL" id="CM002237">
    <property type="protein sequence ID" value="EAA34262.1"/>
    <property type="molecule type" value="Genomic_DNA"/>
</dbReference>
<dbReference type="PIR" id="T51030">
    <property type="entry name" value="T51030"/>
</dbReference>
<dbReference type="PIR" id="T51048">
    <property type="entry name" value="T51048"/>
</dbReference>
<dbReference type="SMR" id="Q9P3I3"/>
<dbReference type="FunCoup" id="Q9P3I3">
    <property type="interactions" value="263"/>
</dbReference>
<dbReference type="STRING" id="367110.Q9P3I3"/>
<dbReference type="PaxDb" id="5141-EFNCRP00000006539"/>
<dbReference type="EnsemblFungi" id="EAA34262">
    <property type="protein sequence ID" value="EAA34262"/>
    <property type="gene ID" value="NCU05410"/>
</dbReference>
<dbReference type="KEGG" id="ncr:NCU05410"/>
<dbReference type="VEuPathDB" id="FungiDB:NCU05410"/>
<dbReference type="HOGENOM" id="CLU_016922_10_1_1"/>
<dbReference type="InParanoid" id="Q9P3I3"/>
<dbReference type="OMA" id="MVPGFKY"/>
<dbReference type="OrthoDB" id="5419315at2759"/>
<dbReference type="UniPathway" id="UPA00068">
    <property type="reaction ID" value="UER00109"/>
</dbReference>
<dbReference type="Proteomes" id="UP000001805">
    <property type="component" value="Chromosome 6, Linkage Group II"/>
</dbReference>
<dbReference type="GO" id="GO:0005759">
    <property type="term" value="C:mitochondrial matrix"/>
    <property type="evidence" value="ECO:0000318"/>
    <property type="project" value="GO_Central"/>
</dbReference>
<dbReference type="GO" id="GO:0042802">
    <property type="term" value="F:identical protein binding"/>
    <property type="evidence" value="ECO:0000318"/>
    <property type="project" value="GO_Central"/>
</dbReference>
<dbReference type="GO" id="GO:0003992">
    <property type="term" value="F:N2-acetyl-L-ornithine:2-oxoglutarate 5-aminotransferase activity"/>
    <property type="evidence" value="ECO:0007669"/>
    <property type="project" value="UniProtKB-EC"/>
</dbReference>
<dbReference type="GO" id="GO:0030170">
    <property type="term" value="F:pyridoxal phosphate binding"/>
    <property type="evidence" value="ECO:0000318"/>
    <property type="project" value="GO_Central"/>
</dbReference>
<dbReference type="GO" id="GO:0042450">
    <property type="term" value="P:arginine biosynthetic process via ornithine"/>
    <property type="evidence" value="ECO:0007669"/>
    <property type="project" value="EnsemblFungi"/>
</dbReference>
<dbReference type="GO" id="GO:0006526">
    <property type="term" value="P:L-arginine biosynthetic process"/>
    <property type="evidence" value="ECO:0007669"/>
    <property type="project" value="UniProtKB-UniPathway"/>
</dbReference>
<dbReference type="CDD" id="cd00610">
    <property type="entry name" value="OAT_like"/>
    <property type="match status" value="1"/>
</dbReference>
<dbReference type="FunFam" id="3.40.640.10:FF:000004">
    <property type="entry name" value="Acetylornithine aminotransferase"/>
    <property type="match status" value="1"/>
</dbReference>
<dbReference type="Gene3D" id="3.90.1150.10">
    <property type="entry name" value="Aspartate Aminotransferase, domain 1"/>
    <property type="match status" value="1"/>
</dbReference>
<dbReference type="Gene3D" id="3.40.640.10">
    <property type="entry name" value="Type I PLP-dependent aspartate aminotransferase-like (Major domain)"/>
    <property type="match status" value="1"/>
</dbReference>
<dbReference type="HAMAP" id="MF_01107">
    <property type="entry name" value="ArgD_aminotrans_3"/>
    <property type="match status" value="1"/>
</dbReference>
<dbReference type="InterPro" id="IPR004636">
    <property type="entry name" value="AcOrn/SuccOrn_fam"/>
</dbReference>
<dbReference type="InterPro" id="IPR005814">
    <property type="entry name" value="Aminotrans_3"/>
</dbReference>
<dbReference type="InterPro" id="IPR049704">
    <property type="entry name" value="Aminotrans_3_PPA_site"/>
</dbReference>
<dbReference type="InterPro" id="IPR050103">
    <property type="entry name" value="Class-III_PLP-dep_AT"/>
</dbReference>
<dbReference type="InterPro" id="IPR015424">
    <property type="entry name" value="PyrdxlP-dep_Trfase"/>
</dbReference>
<dbReference type="InterPro" id="IPR015421">
    <property type="entry name" value="PyrdxlP-dep_Trfase_major"/>
</dbReference>
<dbReference type="InterPro" id="IPR015422">
    <property type="entry name" value="PyrdxlP-dep_Trfase_small"/>
</dbReference>
<dbReference type="NCBIfam" id="TIGR00707">
    <property type="entry name" value="argD"/>
    <property type="match status" value="1"/>
</dbReference>
<dbReference type="NCBIfam" id="NF002325">
    <property type="entry name" value="PRK01278.1"/>
    <property type="match status" value="1"/>
</dbReference>
<dbReference type="PANTHER" id="PTHR11986:SF79">
    <property type="entry name" value="ACETYLORNITHINE AMINOTRANSFERASE, MITOCHONDRIAL"/>
    <property type="match status" value="1"/>
</dbReference>
<dbReference type="PANTHER" id="PTHR11986">
    <property type="entry name" value="AMINOTRANSFERASE CLASS III"/>
    <property type="match status" value="1"/>
</dbReference>
<dbReference type="Pfam" id="PF00202">
    <property type="entry name" value="Aminotran_3"/>
    <property type="match status" value="1"/>
</dbReference>
<dbReference type="PIRSF" id="PIRSF000521">
    <property type="entry name" value="Transaminase_4ab_Lys_Orn"/>
    <property type="match status" value="1"/>
</dbReference>
<dbReference type="SUPFAM" id="SSF53383">
    <property type="entry name" value="PLP-dependent transferases"/>
    <property type="match status" value="1"/>
</dbReference>
<dbReference type="PROSITE" id="PS00600">
    <property type="entry name" value="AA_TRANSFER_CLASS_3"/>
    <property type="match status" value="1"/>
</dbReference>
<proteinExistence type="inferred from homology"/>
<feature type="transit peptide" description="Mitochondrion" evidence="2">
    <location>
        <begin position="1"/>
        <end status="unknown"/>
    </location>
</feature>
<feature type="chain" id="PRO_0000002080" description="Acetylornithine aminotransferase, mitochondrial">
    <location>
        <begin status="unknown"/>
        <end position="461"/>
    </location>
</feature>
<feature type="region of interest" description="Disordered" evidence="3">
    <location>
        <begin position="36"/>
        <end position="56"/>
    </location>
</feature>
<feature type="modified residue" description="N6-(pyridoxal phosphate)lysine" evidence="1">
    <location>
        <position position="312"/>
    </location>
</feature>
<accession>Q9P3I3</accession>
<accession>Q1K8R4</accession>
<gene>
    <name type="primary">arg-8</name>
    <name type="ORF">B7F21.110</name>
    <name type="ORF">NCU05410</name>
</gene>
<organism>
    <name type="scientific">Neurospora crassa (strain ATCC 24698 / 74-OR23-1A / CBS 708.71 / DSM 1257 / FGSC 987)</name>
    <dbReference type="NCBI Taxonomy" id="367110"/>
    <lineage>
        <taxon>Eukaryota</taxon>
        <taxon>Fungi</taxon>
        <taxon>Dikarya</taxon>
        <taxon>Ascomycota</taxon>
        <taxon>Pezizomycotina</taxon>
        <taxon>Sordariomycetes</taxon>
        <taxon>Sordariomycetidae</taxon>
        <taxon>Sordariales</taxon>
        <taxon>Sordariaceae</taxon>
        <taxon>Neurospora</taxon>
    </lineage>
</organism>
<keyword id="KW-0028">Amino-acid biosynthesis</keyword>
<keyword id="KW-0032">Aminotransferase</keyword>
<keyword id="KW-0055">Arginine biosynthesis</keyword>
<keyword id="KW-0496">Mitochondrion</keyword>
<keyword id="KW-0663">Pyridoxal phosphate</keyword>
<keyword id="KW-1185">Reference proteome</keyword>
<keyword id="KW-0808">Transferase</keyword>
<keyword id="KW-0809">Transit peptide</keyword>
<protein>
    <recommendedName>
        <fullName>Acetylornithine aminotransferase, mitochondrial</fullName>
        <shortName>ACOAT</shortName>
        <ecNumber>2.6.1.11</ecNumber>
    </recommendedName>
</protein>
<name>ARGD_NEUCR</name>
<comment type="catalytic activity">
    <reaction>
        <text>N(2)-acetyl-L-ornithine + 2-oxoglutarate = N-acetyl-L-glutamate 5-semialdehyde + L-glutamate</text>
        <dbReference type="Rhea" id="RHEA:18049"/>
        <dbReference type="ChEBI" id="CHEBI:16810"/>
        <dbReference type="ChEBI" id="CHEBI:29123"/>
        <dbReference type="ChEBI" id="CHEBI:29985"/>
        <dbReference type="ChEBI" id="CHEBI:57805"/>
        <dbReference type="EC" id="2.6.1.11"/>
    </reaction>
</comment>
<comment type="cofactor">
    <cofactor evidence="1">
        <name>pyridoxal 5'-phosphate</name>
        <dbReference type="ChEBI" id="CHEBI:597326"/>
    </cofactor>
</comment>
<comment type="pathway">
    <text>Amino-acid biosynthesis; L-arginine biosynthesis; N(2)-acetyl-L-ornithine from L-glutamate: step 4/4.</text>
</comment>
<comment type="subcellular location">
    <subcellularLocation>
        <location evidence="1">Mitochondrion matrix</location>
    </subcellularLocation>
</comment>
<comment type="similarity">
    <text evidence="4">Belongs to the class-III pyridoxal-phosphate-dependent aminotransferase family.</text>
</comment>